<organism>
    <name type="scientific">Shigella flexneri</name>
    <dbReference type="NCBI Taxonomy" id="623"/>
    <lineage>
        <taxon>Bacteria</taxon>
        <taxon>Pseudomonadati</taxon>
        <taxon>Pseudomonadota</taxon>
        <taxon>Gammaproteobacteria</taxon>
        <taxon>Enterobacterales</taxon>
        <taxon>Enterobacteriaceae</taxon>
        <taxon>Shigella</taxon>
    </lineage>
</organism>
<reference key="1">
    <citation type="journal article" date="2002" name="Nucleic Acids Res.">
        <title>Genome sequence of Shigella flexneri 2a: insights into pathogenicity through comparison with genomes of Escherichia coli K12 and O157.</title>
        <authorList>
            <person name="Jin Q."/>
            <person name="Yuan Z."/>
            <person name="Xu J."/>
            <person name="Wang Y."/>
            <person name="Shen Y."/>
            <person name="Lu W."/>
            <person name="Wang J."/>
            <person name="Liu H."/>
            <person name="Yang J."/>
            <person name="Yang F."/>
            <person name="Zhang X."/>
            <person name="Zhang J."/>
            <person name="Yang G."/>
            <person name="Wu H."/>
            <person name="Qu D."/>
            <person name="Dong J."/>
            <person name="Sun L."/>
            <person name="Xue Y."/>
            <person name="Zhao A."/>
            <person name="Gao Y."/>
            <person name="Zhu J."/>
            <person name="Kan B."/>
            <person name="Ding K."/>
            <person name="Chen S."/>
            <person name="Cheng H."/>
            <person name="Yao Z."/>
            <person name="He B."/>
            <person name="Chen R."/>
            <person name="Ma D."/>
            <person name="Qiang B."/>
            <person name="Wen Y."/>
            <person name="Hou Y."/>
            <person name="Yu J."/>
        </authorList>
    </citation>
    <scope>NUCLEOTIDE SEQUENCE [LARGE SCALE GENOMIC DNA]</scope>
    <source>
        <strain>301 / Serotype 2a</strain>
    </source>
</reference>
<reference key="2">
    <citation type="journal article" date="2003" name="Infect. Immun.">
        <title>Complete genome sequence and comparative genomics of Shigella flexneri serotype 2a strain 2457T.</title>
        <authorList>
            <person name="Wei J."/>
            <person name="Goldberg M.B."/>
            <person name="Burland V."/>
            <person name="Venkatesan M.M."/>
            <person name="Deng W."/>
            <person name="Fournier G."/>
            <person name="Mayhew G.F."/>
            <person name="Plunkett G. III"/>
            <person name="Rose D.J."/>
            <person name="Darling A."/>
            <person name="Mau B."/>
            <person name="Perna N.T."/>
            <person name="Payne S.M."/>
            <person name="Runyen-Janecky L.J."/>
            <person name="Zhou S."/>
            <person name="Schwartz D.C."/>
            <person name="Blattner F.R."/>
        </authorList>
    </citation>
    <scope>NUCLEOTIDE SEQUENCE [LARGE SCALE GENOMIC DNA]</scope>
    <source>
        <strain>ATCC 700930 / 2457T / Serotype 2a</strain>
    </source>
</reference>
<protein>
    <recommendedName>
        <fullName>Heme exporter protein D</fullName>
    </recommendedName>
    <alternativeName>
        <fullName>Cytochrome c-type biogenesis protein CcmD</fullName>
    </alternativeName>
</protein>
<keyword id="KW-0997">Cell inner membrane</keyword>
<keyword id="KW-1003">Cell membrane</keyword>
<keyword id="KW-0201">Cytochrome c-type biogenesis</keyword>
<keyword id="KW-0472">Membrane</keyword>
<keyword id="KW-1185">Reference proteome</keyword>
<keyword id="KW-0812">Transmembrane</keyword>
<keyword id="KW-1133">Transmembrane helix</keyword>
<keyword id="KW-0813">Transport</keyword>
<dbReference type="EMBL" id="AE005674">
    <property type="protein sequence ID" value="AAN43801.1"/>
    <property type="molecule type" value="Genomic_DNA"/>
</dbReference>
<dbReference type="EMBL" id="AE014073">
    <property type="protein sequence ID" value="AAP17618.1"/>
    <property type="molecule type" value="Genomic_DNA"/>
</dbReference>
<dbReference type="RefSeq" id="NP_708094.1">
    <property type="nucleotide sequence ID" value="NC_004337.2"/>
</dbReference>
<dbReference type="RefSeq" id="WP_000186540.1">
    <property type="nucleotide sequence ID" value="NZ_WPGW01000022.1"/>
</dbReference>
<dbReference type="SMR" id="P0ABM8"/>
<dbReference type="STRING" id="198214.SF2282"/>
<dbReference type="PaxDb" id="198214-SF2282"/>
<dbReference type="GeneID" id="1027291"/>
<dbReference type="GeneID" id="93774980"/>
<dbReference type="KEGG" id="sfl:SF2282"/>
<dbReference type="KEGG" id="sfx:S2412"/>
<dbReference type="PATRIC" id="fig|198214.7.peg.2733"/>
<dbReference type="HOGENOM" id="CLU_180892_0_0_6"/>
<dbReference type="Proteomes" id="UP000001006">
    <property type="component" value="Chromosome"/>
</dbReference>
<dbReference type="Proteomes" id="UP000002673">
    <property type="component" value="Chromosome"/>
</dbReference>
<dbReference type="GO" id="GO:0005886">
    <property type="term" value="C:plasma membrane"/>
    <property type="evidence" value="ECO:0007669"/>
    <property type="project" value="UniProtKB-SubCell"/>
</dbReference>
<dbReference type="GO" id="GO:1903607">
    <property type="term" value="P:cytochrome c biosynthetic process"/>
    <property type="evidence" value="ECO:0007669"/>
    <property type="project" value="TreeGrafter"/>
</dbReference>
<dbReference type="GO" id="GO:0017004">
    <property type="term" value="P:cytochrome complex assembly"/>
    <property type="evidence" value="ECO:0007669"/>
    <property type="project" value="UniProtKB-KW"/>
</dbReference>
<dbReference type="GO" id="GO:0015886">
    <property type="term" value="P:heme transport"/>
    <property type="evidence" value="ECO:0007669"/>
    <property type="project" value="InterPro"/>
</dbReference>
<dbReference type="InterPro" id="IPR007078">
    <property type="entry name" value="Haem_export_protD_CcmD"/>
</dbReference>
<dbReference type="InterPro" id="IPR052075">
    <property type="entry name" value="Heme_exporter_D"/>
</dbReference>
<dbReference type="NCBIfam" id="TIGR03141">
    <property type="entry name" value="cytochro_ccmD"/>
    <property type="match status" value="1"/>
</dbReference>
<dbReference type="PANTHER" id="PTHR37531">
    <property type="entry name" value="HEME EXPORTER PROTEIN D"/>
    <property type="match status" value="1"/>
</dbReference>
<dbReference type="PANTHER" id="PTHR37531:SF1">
    <property type="entry name" value="HEME EXPORTER PROTEIN D"/>
    <property type="match status" value="1"/>
</dbReference>
<dbReference type="Pfam" id="PF04995">
    <property type="entry name" value="CcmD"/>
    <property type="match status" value="1"/>
</dbReference>
<sequence length="69" mass="7745">MTPAFASWNEFFAMGGYAFFVWLAVVMTVIPLVVLVVHSVMQHRAILRGVAQQRAREARLRAAQQQEAA</sequence>
<gene>
    <name type="primary">ccmD</name>
    <name type="ordered locus">SF2282</name>
    <name type="ordered locus">S2412</name>
</gene>
<proteinExistence type="inferred from homology"/>
<evidence type="ECO:0000250" key="1"/>
<evidence type="ECO:0000255" key="2"/>
<evidence type="ECO:0000305" key="3"/>
<accession>P0ABM8</accession>
<accession>P36770</accession>
<comment type="function">
    <text evidence="1">Required for the export of heme to the periplasm for the biogenesis of c-type cytochromes.</text>
</comment>
<comment type="subcellular location">
    <subcellularLocation>
        <location evidence="3">Cell inner membrane</location>
        <topology evidence="3">Single-pass membrane protein</topology>
    </subcellularLocation>
</comment>
<comment type="similarity">
    <text evidence="3">Belongs to the CcmD/CycX/HelD family.</text>
</comment>
<name>CCMD_SHIFL</name>
<feature type="chain" id="PRO_0000201566" description="Heme exporter protein D">
    <location>
        <begin position="1"/>
        <end position="69"/>
    </location>
</feature>
<feature type="transmembrane region" description="Helical" evidence="2">
    <location>
        <begin position="18"/>
        <end position="37"/>
    </location>
</feature>